<proteinExistence type="inferred from homology"/>
<sequence length="501" mass="54675">MAINAQEISALIKQQIENFKPNFDVTETGVVTYIGDGIARAHGLENVMSGELLNFENGSYGMAQNLESTDVGIIILGDFTDIREGDTIRRTGKIMEVPVGESLIGRVVDPLGRPVDGLGEIHTDKTRPVEAPAPGVMQRKSVSEPLQTGLKAIDALVPIGRGQRELIIGDRQTGKTTIAIDTILNQKDQDMICIYVAIGQKESTVRTQVETLRQYGALDYTIVVTASASQPSPLLFLAPYTGVAMAEEFMYQGKHVLIVYDDLSKQAVAYRELSLLLRRPPGREAFPGDVFYLHSRLLERSAKVSDELGGGSITALPFIETQAGDISAYIATNVISITDGQIFLGDGLFNAGIRPAIDAGSSVSRVGGSAQIKAMKKVAGTLRIDLASYRELEAFTKFGSDLDAATQAKLNRGRRTVEVLKQPVHKPLPVEKQVTILYALTHGFLDTVPVDDIVRFEEEFHAFFDAQHPEILETIRDTKDLPEEAVLDAAITEFLNQSSFQ</sequence>
<dbReference type="EC" id="7.1.2.2" evidence="1"/>
<dbReference type="EMBL" id="CP000918">
    <property type="protein sequence ID" value="ACO17530.1"/>
    <property type="molecule type" value="Genomic_DNA"/>
</dbReference>
<dbReference type="RefSeq" id="WP_000996644.1">
    <property type="nucleotide sequence ID" value="NC_012468.1"/>
</dbReference>
<dbReference type="SMR" id="C1C8A1"/>
<dbReference type="KEGG" id="snm:SP70585_1547"/>
<dbReference type="HOGENOM" id="CLU_010091_2_1_9"/>
<dbReference type="Proteomes" id="UP000002211">
    <property type="component" value="Chromosome"/>
</dbReference>
<dbReference type="GO" id="GO:0005886">
    <property type="term" value="C:plasma membrane"/>
    <property type="evidence" value="ECO:0007669"/>
    <property type="project" value="UniProtKB-SubCell"/>
</dbReference>
<dbReference type="GO" id="GO:0045259">
    <property type="term" value="C:proton-transporting ATP synthase complex"/>
    <property type="evidence" value="ECO:0007669"/>
    <property type="project" value="UniProtKB-KW"/>
</dbReference>
<dbReference type="GO" id="GO:0043531">
    <property type="term" value="F:ADP binding"/>
    <property type="evidence" value="ECO:0007669"/>
    <property type="project" value="TreeGrafter"/>
</dbReference>
<dbReference type="GO" id="GO:0005524">
    <property type="term" value="F:ATP binding"/>
    <property type="evidence" value="ECO:0007669"/>
    <property type="project" value="UniProtKB-UniRule"/>
</dbReference>
<dbReference type="GO" id="GO:0046933">
    <property type="term" value="F:proton-transporting ATP synthase activity, rotational mechanism"/>
    <property type="evidence" value="ECO:0007669"/>
    <property type="project" value="UniProtKB-UniRule"/>
</dbReference>
<dbReference type="CDD" id="cd18113">
    <property type="entry name" value="ATP-synt_F1_alpha_C"/>
    <property type="match status" value="1"/>
</dbReference>
<dbReference type="CDD" id="cd18116">
    <property type="entry name" value="ATP-synt_F1_alpha_N"/>
    <property type="match status" value="1"/>
</dbReference>
<dbReference type="CDD" id="cd01132">
    <property type="entry name" value="F1-ATPase_alpha_CD"/>
    <property type="match status" value="1"/>
</dbReference>
<dbReference type="FunFam" id="1.20.150.20:FF:000001">
    <property type="entry name" value="ATP synthase subunit alpha"/>
    <property type="match status" value="1"/>
</dbReference>
<dbReference type="FunFam" id="2.40.30.20:FF:000001">
    <property type="entry name" value="ATP synthase subunit alpha"/>
    <property type="match status" value="1"/>
</dbReference>
<dbReference type="FunFam" id="3.40.50.300:FF:000002">
    <property type="entry name" value="ATP synthase subunit alpha"/>
    <property type="match status" value="1"/>
</dbReference>
<dbReference type="Gene3D" id="2.40.30.20">
    <property type="match status" value="1"/>
</dbReference>
<dbReference type="Gene3D" id="1.20.150.20">
    <property type="entry name" value="ATP synthase alpha/beta chain, C-terminal domain"/>
    <property type="match status" value="1"/>
</dbReference>
<dbReference type="Gene3D" id="3.40.50.300">
    <property type="entry name" value="P-loop containing nucleotide triphosphate hydrolases"/>
    <property type="match status" value="1"/>
</dbReference>
<dbReference type="HAMAP" id="MF_01346">
    <property type="entry name" value="ATP_synth_alpha_bact"/>
    <property type="match status" value="1"/>
</dbReference>
<dbReference type="InterPro" id="IPR023366">
    <property type="entry name" value="ATP_synth_asu-like_sf"/>
</dbReference>
<dbReference type="InterPro" id="IPR000793">
    <property type="entry name" value="ATP_synth_asu_C"/>
</dbReference>
<dbReference type="InterPro" id="IPR038376">
    <property type="entry name" value="ATP_synth_asu_C_sf"/>
</dbReference>
<dbReference type="InterPro" id="IPR033732">
    <property type="entry name" value="ATP_synth_F1_a_nt-bd_dom"/>
</dbReference>
<dbReference type="InterPro" id="IPR005294">
    <property type="entry name" value="ATP_synth_F1_asu"/>
</dbReference>
<dbReference type="InterPro" id="IPR004100">
    <property type="entry name" value="ATPase_F1/V1/A1_a/bsu_N"/>
</dbReference>
<dbReference type="InterPro" id="IPR036121">
    <property type="entry name" value="ATPase_F1/V1/A1_a/bsu_N_sf"/>
</dbReference>
<dbReference type="InterPro" id="IPR000194">
    <property type="entry name" value="ATPase_F1/V1/A1_a/bsu_nucl-bd"/>
</dbReference>
<dbReference type="InterPro" id="IPR027417">
    <property type="entry name" value="P-loop_NTPase"/>
</dbReference>
<dbReference type="NCBIfam" id="TIGR00962">
    <property type="entry name" value="atpA"/>
    <property type="match status" value="1"/>
</dbReference>
<dbReference type="NCBIfam" id="NF009884">
    <property type="entry name" value="PRK13343.1"/>
    <property type="match status" value="1"/>
</dbReference>
<dbReference type="PANTHER" id="PTHR48082">
    <property type="entry name" value="ATP SYNTHASE SUBUNIT ALPHA, MITOCHONDRIAL"/>
    <property type="match status" value="1"/>
</dbReference>
<dbReference type="PANTHER" id="PTHR48082:SF2">
    <property type="entry name" value="ATP SYNTHASE SUBUNIT ALPHA, MITOCHONDRIAL"/>
    <property type="match status" value="1"/>
</dbReference>
<dbReference type="Pfam" id="PF00006">
    <property type="entry name" value="ATP-synt_ab"/>
    <property type="match status" value="1"/>
</dbReference>
<dbReference type="Pfam" id="PF00306">
    <property type="entry name" value="ATP-synt_ab_C"/>
    <property type="match status" value="1"/>
</dbReference>
<dbReference type="Pfam" id="PF02874">
    <property type="entry name" value="ATP-synt_ab_N"/>
    <property type="match status" value="1"/>
</dbReference>
<dbReference type="PIRSF" id="PIRSF039088">
    <property type="entry name" value="F_ATPase_subunit_alpha"/>
    <property type="match status" value="1"/>
</dbReference>
<dbReference type="SUPFAM" id="SSF47917">
    <property type="entry name" value="C-terminal domain of alpha and beta subunits of F1 ATP synthase"/>
    <property type="match status" value="1"/>
</dbReference>
<dbReference type="SUPFAM" id="SSF50615">
    <property type="entry name" value="N-terminal domain of alpha and beta subunits of F1 ATP synthase"/>
    <property type="match status" value="1"/>
</dbReference>
<dbReference type="SUPFAM" id="SSF52540">
    <property type="entry name" value="P-loop containing nucleoside triphosphate hydrolases"/>
    <property type="match status" value="1"/>
</dbReference>
<reference key="1">
    <citation type="journal article" date="2010" name="Genome Biol.">
        <title>Structure and dynamics of the pan-genome of Streptococcus pneumoniae and closely related species.</title>
        <authorList>
            <person name="Donati C."/>
            <person name="Hiller N.L."/>
            <person name="Tettelin H."/>
            <person name="Muzzi A."/>
            <person name="Croucher N.J."/>
            <person name="Angiuoli S.V."/>
            <person name="Oggioni M."/>
            <person name="Dunning Hotopp J.C."/>
            <person name="Hu F.Z."/>
            <person name="Riley D.R."/>
            <person name="Covacci A."/>
            <person name="Mitchell T.J."/>
            <person name="Bentley S.D."/>
            <person name="Kilian M."/>
            <person name="Ehrlich G.D."/>
            <person name="Rappuoli R."/>
            <person name="Moxon E.R."/>
            <person name="Masignani V."/>
        </authorList>
    </citation>
    <scope>NUCLEOTIDE SEQUENCE [LARGE SCALE GENOMIC DNA]</scope>
    <source>
        <strain>70585</strain>
    </source>
</reference>
<accession>C1C8A1</accession>
<keyword id="KW-0066">ATP synthesis</keyword>
<keyword id="KW-0067">ATP-binding</keyword>
<keyword id="KW-1003">Cell membrane</keyword>
<keyword id="KW-0139">CF(1)</keyword>
<keyword id="KW-0375">Hydrogen ion transport</keyword>
<keyword id="KW-0406">Ion transport</keyword>
<keyword id="KW-0472">Membrane</keyword>
<keyword id="KW-0547">Nucleotide-binding</keyword>
<keyword id="KW-1278">Translocase</keyword>
<keyword id="KW-0813">Transport</keyword>
<organism>
    <name type="scientific">Streptococcus pneumoniae (strain 70585)</name>
    <dbReference type="NCBI Taxonomy" id="488221"/>
    <lineage>
        <taxon>Bacteria</taxon>
        <taxon>Bacillati</taxon>
        <taxon>Bacillota</taxon>
        <taxon>Bacilli</taxon>
        <taxon>Lactobacillales</taxon>
        <taxon>Streptococcaceae</taxon>
        <taxon>Streptococcus</taxon>
    </lineage>
</organism>
<protein>
    <recommendedName>
        <fullName evidence="1">ATP synthase subunit alpha</fullName>
        <ecNumber evidence="1">7.1.2.2</ecNumber>
    </recommendedName>
    <alternativeName>
        <fullName evidence="1">ATP synthase F1 sector subunit alpha</fullName>
    </alternativeName>
    <alternativeName>
        <fullName evidence="1">F-ATPase subunit alpha</fullName>
    </alternativeName>
</protein>
<comment type="function">
    <text evidence="1">Produces ATP from ADP in the presence of a proton gradient across the membrane. The alpha chain is a regulatory subunit.</text>
</comment>
<comment type="catalytic activity">
    <reaction evidence="1">
        <text>ATP + H2O + 4 H(+)(in) = ADP + phosphate + 5 H(+)(out)</text>
        <dbReference type="Rhea" id="RHEA:57720"/>
        <dbReference type="ChEBI" id="CHEBI:15377"/>
        <dbReference type="ChEBI" id="CHEBI:15378"/>
        <dbReference type="ChEBI" id="CHEBI:30616"/>
        <dbReference type="ChEBI" id="CHEBI:43474"/>
        <dbReference type="ChEBI" id="CHEBI:456216"/>
        <dbReference type="EC" id="7.1.2.2"/>
    </reaction>
</comment>
<comment type="subunit">
    <text evidence="1">F-type ATPases have 2 components, CF(1) - the catalytic core - and CF(0) - the membrane proton channel. CF(1) has five subunits: alpha(3), beta(3), gamma(1), delta(1), epsilon(1). CF(0) has three main subunits: a(1), b(2) and c(9-12). The alpha and beta chains form an alternating ring which encloses part of the gamma chain. CF(1) is attached to CF(0) by a central stalk formed by the gamma and epsilon chains, while a peripheral stalk is formed by the delta and b chains.</text>
</comment>
<comment type="subcellular location">
    <subcellularLocation>
        <location evidence="1">Cell membrane</location>
        <topology evidence="1">Peripheral membrane protein</topology>
    </subcellularLocation>
</comment>
<comment type="similarity">
    <text evidence="1">Belongs to the ATPase alpha/beta chains family.</text>
</comment>
<gene>
    <name evidence="1" type="primary">atpA</name>
    <name type="ordered locus">SP70585_1547</name>
</gene>
<name>ATPA_STRP7</name>
<evidence type="ECO:0000255" key="1">
    <source>
        <dbReference type="HAMAP-Rule" id="MF_01346"/>
    </source>
</evidence>
<feature type="chain" id="PRO_1000214817" description="ATP synthase subunit alpha">
    <location>
        <begin position="1"/>
        <end position="501"/>
    </location>
</feature>
<feature type="binding site" evidence="1">
    <location>
        <begin position="169"/>
        <end position="176"/>
    </location>
    <ligand>
        <name>ATP</name>
        <dbReference type="ChEBI" id="CHEBI:30616"/>
    </ligand>
</feature>
<feature type="site" description="Required for activity" evidence="1">
    <location>
        <position position="362"/>
    </location>
</feature>